<sequence>MNKLLIFIMLVTFLAIEKSFMSEVDNMKLEFVQTIWRHGDRSALEGLFPISEKNWTFGGGGLGELTPMGMSEMNNLGTIFRRRYVEDQQFLSHRYAAKEIYIRSTNLNRTIISAMSLLYGMFPPGAWNIQGVDYPNDVDWQQGFTFIPVHVDGIDQCAVAQLCNCRRFQELQEKWAELDEVKNATVAMIALNRRVAAFYNVTDQPEKFNRYTDAWKCQRNWFNDTMYQQLPWYNEDLYNEAQRTYAPFKRFTEGNFAKPSIVDGIDIPQEVSTLQGGPLLNEIFERGREKIRCVADAENCSIDYLKPLKFYAYSSHDQLVYALLVTLGITDVVKTVDGWPDTSSSLTIEYYSNPGNQSSVKFLYRDNSNDNFSDVTSQIPVCNGAQYCAMSDFQNIAYQFKPLPDYMTLCETSLSSISSVLNNKIWVFVIIYFLI</sequence>
<feature type="chain" id="PRO_0000114470" description="Putative acid phosphatase F26C11.1">
    <location>
        <begin position="1"/>
        <end position="435"/>
    </location>
</feature>
<feature type="active site" description="Nucleophile" evidence="1">
    <location>
        <position position="38"/>
    </location>
</feature>
<feature type="active site" description="Proton donor" evidence="1">
    <location>
        <position position="317"/>
    </location>
</feature>
<feature type="disulfide bond" evidence="1">
    <location>
        <begin position="382"/>
        <end position="388"/>
    </location>
</feature>
<proteinExistence type="inferred from homology"/>
<dbReference type="EC" id="3.1.3.2"/>
<dbReference type="EMBL" id="Z47072">
    <property type="protein sequence ID" value="CAA87370.2"/>
    <property type="molecule type" value="Genomic_DNA"/>
</dbReference>
<dbReference type="PIR" id="T19118">
    <property type="entry name" value="T19118"/>
</dbReference>
<dbReference type="RefSeq" id="NP_496137.2">
    <property type="nucleotide sequence ID" value="NM_063736.5"/>
</dbReference>
<dbReference type="SMR" id="Q09549"/>
<dbReference type="FunCoup" id="Q09549">
    <property type="interactions" value="109"/>
</dbReference>
<dbReference type="STRING" id="6239.F26C11.1.1"/>
<dbReference type="PaxDb" id="6239-F26C11.1"/>
<dbReference type="EnsemblMetazoa" id="F26C11.1.1">
    <property type="protein sequence ID" value="F26C11.1.1"/>
    <property type="gene ID" value="WBGene00009146"/>
</dbReference>
<dbReference type="EnsemblMetazoa" id="F26C11.1.2">
    <property type="protein sequence ID" value="F26C11.1.2"/>
    <property type="gene ID" value="WBGene00009146"/>
</dbReference>
<dbReference type="GeneID" id="184959"/>
<dbReference type="KEGG" id="cel:CELE_F26C11.1"/>
<dbReference type="UCSC" id="F26C11.1">
    <property type="organism name" value="c. elegans"/>
</dbReference>
<dbReference type="AGR" id="WB:WBGene00009146"/>
<dbReference type="CTD" id="184959"/>
<dbReference type="WormBase" id="F26C11.1">
    <property type="protein sequence ID" value="CE01559"/>
    <property type="gene ID" value="WBGene00009146"/>
</dbReference>
<dbReference type="eggNOG" id="KOG3720">
    <property type="taxonomic scope" value="Eukaryota"/>
</dbReference>
<dbReference type="GeneTree" id="ENSGT00940000168803"/>
<dbReference type="HOGENOM" id="CLU_030431_2_0_1"/>
<dbReference type="InParanoid" id="Q09549"/>
<dbReference type="OMA" id="GSMMNDI"/>
<dbReference type="OrthoDB" id="258392at2759"/>
<dbReference type="PhylomeDB" id="Q09549"/>
<dbReference type="PRO" id="PR:Q09549"/>
<dbReference type="Proteomes" id="UP000001940">
    <property type="component" value="Chromosome II"/>
</dbReference>
<dbReference type="Bgee" id="WBGene00009146">
    <property type="expression patterns" value="Expressed in adult organism and 1 other cell type or tissue"/>
</dbReference>
<dbReference type="GO" id="GO:0003993">
    <property type="term" value="F:acid phosphatase activity"/>
    <property type="evidence" value="ECO:0007669"/>
    <property type="project" value="UniProtKB-EC"/>
</dbReference>
<dbReference type="GO" id="GO:0016791">
    <property type="term" value="F:phosphatase activity"/>
    <property type="evidence" value="ECO:0000318"/>
    <property type="project" value="GO_Central"/>
</dbReference>
<dbReference type="CDD" id="cd07061">
    <property type="entry name" value="HP_HAP_like"/>
    <property type="match status" value="1"/>
</dbReference>
<dbReference type="Gene3D" id="3.40.50.1240">
    <property type="entry name" value="Phosphoglycerate mutase-like"/>
    <property type="match status" value="1"/>
</dbReference>
<dbReference type="InterPro" id="IPR033379">
    <property type="entry name" value="Acid_Pase_AS"/>
</dbReference>
<dbReference type="InterPro" id="IPR000560">
    <property type="entry name" value="His_Pase_clade-2"/>
</dbReference>
<dbReference type="InterPro" id="IPR029033">
    <property type="entry name" value="His_PPase_superfam"/>
</dbReference>
<dbReference type="InterPro" id="IPR050645">
    <property type="entry name" value="Histidine_acid_phosphatase"/>
</dbReference>
<dbReference type="PANTHER" id="PTHR11567">
    <property type="entry name" value="ACID PHOSPHATASE-RELATED"/>
    <property type="match status" value="1"/>
</dbReference>
<dbReference type="PANTHER" id="PTHR11567:SF206">
    <property type="entry name" value="HISTIDINE ACID PHOSPHATASE-RELATED"/>
    <property type="match status" value="1"/>
</dbReference>
<dbReference type="Pfam" id="PF00328">
    <property type="entry name" value="His_Phos_2"/>
    <property type="match status" value="1"/>
</dbReference>
<dbReference type="SUPFAM" id="SSF53254">
    <property type="entry name" value="Phosphoglycerate mutase-like"/>
    <property type="match status" value="1"/>
</dbReference>
<dbReference type="PROSITE" id="PS00616">
    <property type="entry name" value="HIS_ACID_PHOSPHAT_1"/>
    <property type="match status" value="1"/>
</dbReference>
<dbReference type="PROSITE" id="PS00778">
    <property type="entry name" value="HIS_ACID_PHOSPHAT_2"/>
    <property type="match status" value="1"/>
</dbReference>
<evidence type="ECO:0000250" key="1"/>
<evidence type="ECO:0000305" key="2"/>
<keyword id="KW-1015">Disulfide bond</keyword>
<keyword id="KW-0378">Hydrolase</keyword>
<keyword id="KW-1185">Reference proteome</keyword>
<accession>Q09549</accession>
<accession>Q17843</accession>
<protein>
    <recommendedName>
        <fullName>Putative acid phosphatase F26C11.1</fullName>
        <ecNumber>3.1.3.2</ecNumber>
    </recommendedName>
</protein>
<name>PPAX_CAEEL</name>
<organism>
    <name type="scientific">Caenorhabditis elegans</name>
    <dbReference type="NCBI Taxonomy" id="6239"/>
    <lineage>
        <taxon>Eukaryota</taxon>
        <taxon>Metazoa</taxon>
        <taxon>Ecdysozoa</taxon>
        <taxon>Nematoda</taxon>
        <taxon>Chromadorea</taxon>
        <taxon>Rhabditida</taxon>
        <taxon>Rhabditina</taxon>
        <taxon>Rhabditomorpha</taxon>
        <taxon>Rhabditoidea</taxon>
        <taxon>Rhabditidae</taxon>
        <taxon>Peloderinae</taxon>
        <taxon>Caenorhabditis</taxon>
    </lineage>
</organism>
<comment type="catalytic activity">
    <reaction>
        <text>a phosphate monoester + H2O = an alcohol + phosphate</text>
        <dbReference type="Rhea" id="RHEA:15017"/>
        <dbReference type="ChEBI" id="CHEBI:15377"/>
        <dbReference type="ChEBI" id="CHEBI:30879"/>
        <dbReference type="ChEBI" id="CHEBI:43474"/>
        <dbReference type="ChEBI" id="CHEBI:67140"/>
        <dbReference type="EC" id="3.1.3.2"/>
    </reaction>
</comment>
<comment type="similarity">
    <text evidence="2">Belongs to the histidine acid phosphatase family.</text>
</comment>
<reference key="1">
    <citation type="journal article" date="1998" name="Science">
        <title>Genome sequence of the nematode C. elegans: a platform for investigating biology.</title>
        <authorList>
            <consortium name="The C. elegans sequencing consortium"/>
        </authorList>
    </citation>
    <scope>NUCLEOTIDE SEQUENCE [LARGE SCALE GENOMIC DNA]</scope>
    <source>
        <strain>Bristol N2</strain>
    </source>
</reference>
<gene>
    <name type="ORF">F26C11.1</name>
</gene>